<sequence length="901" mass="102643">MTTQLNINSVIENAKRVITPLSPISIFAARNPWEGLEADTFEDVAKWLRDVRDVDIFPNKALIESAVARGELDESVFNQLVTDMLLEHHYNIPQHYINLYIDNIKTLKDVPASYMNHSNVDVVADLLLEKSKRDMAESYHHYDVRPMSDAIIDEQGEPLSEQVNRQMIKWTKLYIDQFLSSWTMPKREQSFYHAWLHLAQHDHSFTKAQRQVIKGLPNDPEMTIESVLTHFSIDQEDYQAYVEGHLLALPGWAGMLYYRSQQHYFEQHLLTDYLAIRLVVEQLLVGDEFKSVAKDCESRSENWFKQTVASWCYYSDMPSDVLLQHDVNEIQTFIHFAATMNKNVFKNLWLIAWEMTYESQLKQKIKAGHESVAGALDVNQVNVSENDNANQPHSVLLNDTQAVDENNSELNQMGTSTKAQIAFCIDVRSEPFRRHIEAAGPFETIGIAGFFGLPIQKDAVDEQFKHDSLPVMVPPAYRIKEFADRYDMNVYRQQQQTMSSMFYTFKLMKNNVMPSLLLPELSGPFLSLSTIVNSIMPRKSRASLQKIKQKWLKKPETKLTIDREFDRTSDLPVGFTEQEQIDFALQALKLMDLTEAFAPFVVLAGHASHSHNNPHHASLECGACGGASSGFNAKLLAMICNRPNVRQGLKQSGVYIPETTVFAVAEHHTSTDTLAWVYVPDTLSSIALDAYESLNDAMPMISEHANRERLDKLPTIGRVNHPVEEAQRFASDWSEVRPEWGLAKNASFIIGRRQLTKGIDLEGRTFLHNYDWRKDKDGTLLNTIISGPALVAQWINLQYYASTVAPHFYGSGNKATQTVTSGVGVMQGNASDLMYGLSWQSVMAADRTMYHSPIRLLVVIQAPDYVVARLLANNEHFARKVSNHWLRLMSVNEEGRFKSWI</sequence>
<evidence type="ECO:0000255" key="1">
    <source>
        <dbReference type="HAMAP-Rule" id="MF_01871"/>
    </source>
</evidence>
<feature type="chain" id="PRO_0000387315" description="Probable inorganic carbon transporter subunit DabA">
    <location>
        <begin position="1"/>
        <end position="901"/>
    </location>
</feature>
<feature type="binding site" evidence="1">
    <location>
        <position position="424"/>
    </location>
    <ligand>
        <name>Zn(2+)</name>
        <dbReference type="ChEBI" id="CHEBI:29105"/>
    </ligand>
</feature>
<feature type="binding site" evidence="1">
    <location>
        <position position="426"/>
    </location>
    <ligand>
        <name>Zn(2+)</name>
        <dbReference type="ChEBI" id="CHEBI:29105"/>
    </ligand>
</feature>
<feature type="binding site" evidence="1">
    <location>
        <position position="606"/>
    </location>
    <ligand>
        <name>Zn(2+)</name>
        <dbReference type="ChEBI" id="CHEBI:29105"/>
    </ligand>
</feature>
<feature type="binding site" evidence="1">
    <location>
        <position position="621"/>
    </location>
    <ligand>
        <name>Zn(2+)</name>
        <dbReference type="ChEBI" id="CHEBI:29105"/>
    </ligand>
</feature>
<keyword id="KW-1003">Cell membrane</keyword>
<keyword id="KW-0472">Membrane</keyword>
<keyword id="KW-0479">Metal-binding</keyword>
<keyword id="KW-0813">Transport</keyword>
<keyword id="KW-0862">Zinc</keyword>
<protein>
    <recommendedName>
        <fullName evidence="1">Probable inorganic carbon transporter subunit DabA</fullName>
    </recommendedName>
</protein>
<accession>Q2FJI9</accession>
<reference key="1">
    <citation type="journal article" date="2006" name="Lancet">
        <title>Complete genome sequence of USA300, an epidemic clone of community-acquired meticillin-resistant Staphylococcus aureus.</title>
        <authorList>
            <person name="Diep B.A."/>
            <person name="Gill S.R."/>
            <person name="Chang R.F."/>
            <person name="Phan T.H."/>
            <person name="Chen J.H."/>
            <person name="Davidson M.G."/>
            <person name="Lin F."/>
            <person name="Lin J."/>
            <person name="Carleton H.A."/>
            <person name="Mongodin E.F."/>
            <person name="Sensabaugh G.F."/>
            <person name="Perdreau-Remington F."/>
        </authorList>
    </citation>
    <scope>NUCLEOTIDE SEQUENCE [LARGE SCALE GENOMIC DNA]</scope>
    <source>
        <strain>USA300</strain>
    </source>
</reference>
<comment type="function">
    <text evidence="1">Part of an energy-coupled inorganic carbon pump.</text>
</comment>
<comment type="cofactor">
    <cofactor evidence="1">
        <name>Zn(2+)</name>
        <dbReference type="ChEBI" id="CHEBI:29105"/>
    </cofactor>
</comment>
<comment type="subunit">
    <text evidence="1">Forms a complex with DabB.</text>
</comment>
<comment type="subcellular location">
    <subcellularLocation>
        <location evidence="1">Cell membrane</location>
        <topology evidence="1">Peripheral membrane protein</topology>
    </subcellularLocation>
</comment>
<comment type="similarity">
    <text evidence="1">Belongs to the inorganic carbon transporter (TC 9.A.2) DabA family.</text>
</comment>
<dbReference type="EMBL" id="CP000255">
    <property type="protein sequence ID" value="ABD22874.1"/>
    <property type="molecule type" value="Genomic_DNA"/>
</dbReference>
<dbReference type="RefSeq" id="WP_000211543.1">
    <property type="nucleotide sequence ID" value="NZ_CP027476.1"/>
</dbReference>
<dbReference type="KEGG" id="saa:SAUSA300_0426"/>
<dbReference type="HOGENOM" id="CLU_009885_0_0_9"/>
<dbReference type="OMA" id="WTMPNRE"/>
<dbReference type="Proteomes" id="UP000001939">
    <property type="component" value="Chromosome"/>
</dbReference>
<dbReference type="GO" id="GO:0005886">
    <property type="term" value="C:plasma membrane"/>
    <property type="evidence" value="ECO:0007669"/>
    <property type="project" value="UniProtKB-SubCell"/>
</dbReference>
<dbReference type="GO" id="GO:0008270">
    <property type="term" value="F:zinc ion binding"/>
    <property type="evidence" value="ECO:0007669"/>
    <property type="project" value="UniProtKB-UniRule"/>
</dbReference>
<dbReference type="HAMAP" id="MF_01871">
    <property type="entry name" value="DabA"/>
    <property type="match status" value="1"/>
</dbReference>
<dbReference type="InterPro" id="IPR018752">
    <property type="entry name" value="DabA"/>
</dbReference>
<dbReference type="PANTHER" id="PTHR38344:SF1">
    <property type="entry name" value="INORGANIC CARBON TRANSPORTER SUBUNIT DABA-RELATED"/>
    <property type="match status" value="1"/>
</dbReference>
<dbReference type="PANTHER" id="PTHR38344">
    <property type="entry name" value="UPF0753 PROTEIN AQ_863"/>
    <property type="match status" value="1"/>
</dbReference>
<dbReference type="Pfam" id="PF10070">
    <property type="entry name" value="DabA"/>
    <property type="match status" value="1"/>
</dbReference>
<name>DABA_STAA3</name>
<gene>
    <name evidence="1" type="primary">dabA</name>
    <name type="ordered locus">SAUSA300_0426</name>
</gene>
<organism>
    <name type="scientific">Staphylococcus aureus (strain USA300)</name>
    <dbReference type="NCBI Taxonomy" id="367830"/>
    <lineage>
        <taxon>Bacteria</taxon>
        <taxon>Bacillati</taxon>
        <taxon>Bacillota</taxon>
        <taxon>Bacilli</taxon>
        <taxon>Bacillales</taxon>
        <taxon>Staphylococcaceae</taxon>
        <taxon>Staphylococcus</taxon>
    </lineage>
</organism>
<proteinExistence type="inferred from homology"/>